<name>PSB2_THEON</name>
<feature type="propeptide" id="PRO_0000397470" description="Removed in mature form; by autocatalysis" evidence="1">
    <location>
        <begin position="1"/>
        <end position="7"/>
    </location>
</feature>
<feature type="chain" id="PRO_0000397471" description="Proteasome subunit beta 2">
    <location>
        <begin position="8"/>
        <end position="200"/>
    </location>
</feature>
<feature type="active site" description="Nucleophile" evidence="1">
    <location>
        <position position="8"/>
    </location>
</feature>
<keyword id="KW-0068">Autocatalytic cleavage</keyword>
<keyword id="KW-0963">Cytoplasm</keyword>
<keyword id="KW-0378">Hydrolase</keyword>
<keyword id="KW-0645">Protease</keyword>
<keyword id="KW-0647">Proteasome</keyword>
<keyword id="KW-0888">Threonine protease</keyword>
<keyword id="KW-0865">Zymogen</keyword>
<organism>
    <name type="scientific">Thermococcus onnurineus (strain NA1)</name>
    <dbReference type="NCBI Taxonomy" id="523850"/>
    <lineage>
        <taxon>Archaea</taxon>
        <taxon>Methanobacteriati</taxon>
        <taxon>Methanobacteriota</taxon>
        <taxon>Thermococci</taxon>
        <taxon>Thermococcales</taxon>
        <taxon>Thermococcaceae</taxon>
        <taxon>Thermococcus</taxon>
    </lineage>
</organism>
<reference key="1">
    <citation type="journal article" date="2008" name="J. Bacteriol.">
        <title>The complete genome sequence of Thermococcus onnurineus NA1 reveals a mixed heterotrophic and carboxydotrophic metabolism.</title>
        <authorList>
            <person name="Lee H.S."/>
            <person name="Kang S.G."/>
            <person name="Bae S.S."/>
            <person name="Lim J.K."/>
            <person name="Cho Y."/>
            <person name="Kim Y.J."/>
            <person name="Jeon J.H."/>
            <person name="Cha S.-S."/>
            <person name="Kwon K.K."/>
            <person name="Kim H.-T."/>
            <person name="Park C.-J."/>
            <person name="Lee H.-W."/>
            <person name="Kim S.I."/>
            <person name="Chun J."/>
            <person name="Colwell R.R."/>
            <person name="Kim S.-J."/>
            <person name="Lee J.-H."/>
        </authorList>
    </citation>
    <scope>NUCLEOTIDE SEQUENCE [LARGE SCALE GENOMIC DNA]</scope>
    <source>
        <strain>NA1</strain>
    </source>
</reference>
<proteinExistence type="inferred from homology"/>
<accession>B6YXV3</accession>
<dbReference type="EC" id="3.4.25.1" evidence="1"/>
<dbReference type="EMBL" id="CP000855">
    <property type="protein sequence ID" value="ACJ16916.1"/>
    <property type="molecule type" value="Genomic_DNA"/>
</dbReference>
<dbReference type="RefSeq" id="WP_012572388.1">
    <property type="nucleotide sequence ID" value="NC_011529.1"/>
</dbReference>
<dbReference type="SMR" id="B6YXV3"/>
<dbReference type="STRING" id="523850.TON_1426"/>
<dbReference type="MEROPS" id="T01.002"/>
<dbReference type="GeneID" id="7018460"/>
<dbReference type="KEGG" id="ton:TON_1426"/>
<dbReference type="PATRIC" id="fig|523850.10.peg.1437"/>
<dbReference type="eggNOG" id="arCOG00970">
    <property type="taxonomic scope" value="Archaea"/>
</dbReference>
<dbReference type="HOGENOM" id="CLU_035750_7_2_2"/>
<dbReference type="OrthoDB" id="6330at2157"/>
<dbReference type="Proteomes" id="UP000002727">
    <property type="component" value="Chromosome"/>
</dbReference>
<dbReference type="GO" id="GO:0005737">
    <property type="term" value="C:cytoplasm"/>
    <property type="evidence" value="ECO:0007669"/>
    <property type="project" value="UniProtKB-SubCell"/>
</dbReference>
<dbReference type="GO" id="GO:0019774">
    <property type="term" value="C:proteasome core complex, beta-subunit complex"/>
    <property type="evidence" value="ECO:0007669"/>
    <property type="project" value="UniProtKB-UniRule"/>
</dbReference>
<dbReference type="GO" id="GO:0004298">
    <property type="term" value="F:threonine-type endopeptidase activity"/>
    <property type="evidence" value="ECO:0007669"/>
    <property type="project" value="UniProtKB-UniRule"/>
</dbReference>
<dbReference type="GO" id="GO:0010498">
    <property type="term" value="P:proteasomal protein catabolic process"/>
    <property type="evidence" value="ECO:0007669"/>
    <property type="project" value="UniProtKB-UniRule"/>
</dbReference>
<dbReference type="FunFam" id="3.60.20.10:FF:000049">
    <property type="entry name" value="Proteasome subunit beta"/>
    <property type="match status" value="1"/>
</dbReference>
<dbReference type="Gene3D" id="3.60.20.10">
    <property type="entry name" value="Glutamine Phosphoribosylpyrophosphate, subunit 1, domain 1"/>
    <property type="match status" value="1"/>
</dbReference>
<dbReference type="HAMAP" id="MF_02113_A">
    <property type="entry name" value="Proteasome_B_A"/>
    <property type="match status" value="1"/>
</dbReference>
<dbReference type="InterPro" id="IPR029055">
    <property type="entry name" value="Ntn_hydrolases_N"/>
</dbReference>
<dbReference type="InterPro" id="IPR019983">
    <property type="entry name" value="Pept_T1A_Psome_bsu_arc"/>
</dbReference>
<dbReference type="InterPro" id="IPR000243">
    <property type="entry name" value="Pept_T1A_subB"/>
</dbReference>
<dbReference type="InterPro" id="IPR016050">
    <property type="entry name" value="Proteasome_bsu_CS"/>
</dbReference>
<dbReference type="InterPro" id="IPR001353">
    <property type="entry name" value="Proteasome_sua/b"/>
</dbReference>
<dbReference type="InterPro" id="IPR023333">
    <property type="entry name" value="Proteasome_suB-type"/>
</dbReference>
<dbReference type="NCBIfam" id="TIGR03634">
    <property type="entry name" value="arc_protsome_B"/>
    <property type="match status" value="1"/>
</dbReference>
<dbReference type="PANTHER" id="PTHR32194:SF0">
    <property type="entry name" value="ATP-DEPENDENT PROTEASE SUBUNIT HSLV"/>
    <property type="match status" value="1"/>
</dbReference>
<dbReference type="PANTHER" id="PTHR32194">
    <property type="entry name" value="METALLOPROTEASE TLDD"/>
    <property type="match status" value="1"/>
</dbReference>
<dbReference type="Pfam" id="PF00227">
    <property type="entry name" value="Proteasome"/>
    <property type="match status" value="1"/>
</dbReference>
<dbReference type="PRINTS" id="PR00141">
    <property type="entry name" value="PROTEASOME"/>
</dbReference>
<dbReference type="SUPFAM" id="SSF56235">
    <property type="entry name" value="N-terminal nucleophile aminohydrolases (Ntn hydrolases)"/>
    <property type="match status" value="1"/>
</dbReference>
<dbReference type="PROSITE" id="PS00854">
    <property type="entry name" value="PROTEASOME_BETA_1"/>
    <property type="match status" value="1"/>
</dbReference>
<dbReference type="PROSITE" id="PS51476">
    <property type="entry name" value="PROTEASOME_BETA_2"/>
    <property type="match status" value="1"/>
</dbReference>
<protein>
    <recommendedName>
        <fullName evidence="1">Proteasome subunit beta 2</fullName>
        <ecNumber evidence="1">3.4.25.1</ecNumber>
    </recommendedName>
    <alternativeName>
        <fullName evidence="1">20S proteasome beta subunit 2</fullName>
    </alternativeName>
    <alternativeName>
        <fullName evidence="1">Proteasome core protein PsmB 2</fullName>
    </alternativeName>
</protein>
<evidence type="ECO:0000255" key="1">
    <source>
        <dbReference type="HAMAP-Rule" id="MF_02113"/>
    </source>
</evidence>
<sequence>METKKTGTTTVGIKAKDGIVLAADTQASLGHMVETLNIRKIIPITDRIAITTAGSVGDVQALARMLEAEARYYQFTWGKPMSTKAMANLLSNILNGNKWFPYLVQIILGGYVEEPTLANLDPLGGLIFDDYTATGSGSPFAIAVLEDGYKKDMSIEEAKELAVRAVRTAGKRDVYTGSRKIQIVAITKEGITEEFVEFND</sequence>
<gene>
    <name evidence="1" type="primary">psmB2</name>
    <name type="ordered locus">TON_1426</name>
</gene>
<comment type="function">
    <text evidence="1">Component of the proteasome core, a large protease complex with broad specificity involved in protein degradation.</text>
</comment>
<comment type="catalytic activity">
    <reaction evidence="1">
        <text>Cleavage of peptide bonds with very broad specificity.</text>
        <dbReference type="EC" id="3.4.25.1"/>
    </reaction>
</comment>
<comment type="activity regulation">
    <text evidence="1">The formation of the proteasomal ATPase PAN-20S proteasome complex, via the docking of the C-termini of PAN into the intersubunit pockets in the alpha-rings, triggers opening of the gate for substrate entry. Interconversion between the open-gate and close-gate conformations leads to a dynamic regulation of the 20S proteasome proteolysis activity.</text>
</comment>
<comment type="subunit">
    <text evidence="1">The 20S proteasome core is composed of 14 alpha and 14 beta subunits that assemble into four stacked heptameric rings, resulting in a barrel-shaped structure. The two inner rings, each composed of seven catalytic beta subunits, are sandwiched by two outer rings, each composed of seven alpha subunits. The catalytic chamber with the active sites is on the inside of the barrel. Has a gated structure, the ends of the cylinder being occluded by the N-termini of the alpha-subunits. Is capped at one or both ends by the proteasome regulatory ATPase, PAN.</text>
</comment>
<comment type="subcellular location">
    <subcellularLocation>
        <location evidence="1">Cytoplasm</location>
    </subcellularLocation>
</comment>
<comment type="similarity">
    <text evidence="1">Belongs to the peptidase T1B family.</text>
</comment>